<keyword id="KW-0007">Acetylation</keyword>
<keyword id="KW-1185">Reference proteome</keyword>
<keyword id="KW-0687">Ribonucleoprotein</keyword>
<keyword id="KW-0689">Ribosomal protein</keyword>
<keyword id="KW-0694">RNA-binding</keyword>
<keyword id="KW-0699">rRNA-binding</keyword>
<gene>
    <name type="primary">rpsR</name>
    <name type="ordered locus">SF4355</name>
    <name type="ordered locus">S4627</name>
</gene>
<name>RS18_SHIFL</name>
<reference key="1">
    <citation type="journal article" date="2002" name="Nucleic Acids Res.">
        <title>Genome sequence of Shigella flexneri 2a: insights into pathogenicity through comparison with genomes of Escherichia coli K12 and O157.</title>
        <authorList>
            <person name="Jin Q."/>
            <person name="Yuan Z."/>
            <person name="Xu J."/>
            <person name="Wang Y."/>
            <person name="Shen Y."/>
            <person name="Lu W."/>
            <person name="Wang J."/>
            <person name="Liu H."/>
            <person name="Yang J."/>
            <person name="Yang F."/>
            <person name="Zhang X."/>
            <person name="Zhang J."/>
            <person name="Yang G."/>
            <person name="Wu H."/>
            <person name="Qu D."/>
            <person name="Dong J."/>
            <person name="Sun L."/>
            <person name="Xue Y."/>
            <person name="Zhao A."/>
            <person name="Gao Y."/>
            <person name="Zhu J."/>
            <person name="Kan B."/>
            <person name="Ding K."/>
            <person name="Chen S."/>
            <person name="Cheng H."/>
            <person name="Yao Z."/>
            <person name="He B."/>
            <person name="Chen R."/>
            <person name="Ma D."/>
            <person name="Qiang B."/>
            <person name="Wen Y."/>
            <person name="Hou Y."/>
            <person name="Yu J."/>
        </authorList>
    </citation>
    <scope>NUCLEOTIDE SEQUENCE [LARGE SCALE GENOMIC DNA]</scope>
    <source>
        <strain>301 / Serotype 2a</strain>
    </source>
</reference>
<reference key="2">
    <citation type="journal article" date="2003" name="Infect. Immun.">
        <title>Complete genome sequence and comparative genomics of Shigella flexneri serotype 2a strain 2457T.</title>
        <authorList>
            <person name="Wei J."/>
            <person name="Goldberg M.B."/>
            <person name="Burland V."/>
            <person name="Venkatesan M.M."/>
            <person name="Deng W."/>
            <person name="Fournier G."/>
            <person name="Mayhew G.F."/>
            <person name="Plunkett G. III"/>
            <person name="Rose D.J."/>
            <person name="Darling A."/>
            <person name="Mau B."/>
            <person name="Perna N.T."/>
            <person name="Payne S.M."/>
            <person name="Runyen-Janecky L.J."/>
            <person name="Zhou S."/>
            <person name="Schwartz D.C."/>
            <person name="Blattner F.R."/>
        </authorList>
    </citation>
    <scope>NUCLEOTIDE SEQUENCE [LARGE SCALE GENOMIC DNA]</scope>
    <source>
        <strain>ATCC 700930 / 2457T / Serotype 2a</strain>
    </source>
</reference>
<comment type="function">
    <text evidence="2">Binds as a heterodimer with protein bS6 to the central domain of the 16S rRNA, where it helps stabilize the platform of the 30S subunit.</text>
</comment>
<comment type="subunit">
    <text evidence="2">Part of the 30S ribosomal subunit. Forms a tight heterodimer with protein bS6.</text>
</comment>
<comment type="similarity">
    <text evidence="3">Belongs to the bacterial ribosomal protein bS18 family.</text>
</comment>
<dbReference type="EMBL" id="AE005674">
    <property type="protein sequence ID" value="AAN45772.1"/>
    <property type="molecule type" value="Genomic_DNA"/>
</dbReference>
<dbReference type="EMBL" id="AE014073">
    <property type="protein sequence ID" value="AAP19556.1"/>
    <property type="molecule type" value="Genomic_DNA"/>
</dbReference>
<dbReference type="RefSeq" id="NP_710065.1">
    <property type="nucleotide sequence ID" value="NC_004337.2"/>
</dbReference>
<dbReference type="RefSeq" id="WP_000135199.1">
    <property type="nucleotide sequence ID" value="NZ_WPGW01000113.1"/>
</dbReference>
<dbReference type="SMR" id="P0A7U2"/>
<dbReference type="STRING" id="198214.SF4355"/>
<dbReference type="PaxDb" id="198214-SF4355"/>
<dbReference type="GeneID" id="1025738"/>
<dbReference type="GeneID" id="98186237"/>
<dbReference type="KEGG" id="sfl:SF4355"/>
<dbReference type="KEGG" id="sfx:S4627"/>
<dbReference type="PATRIC" id="fig|198214.7.peg.5136"/>
<dbReference type="HOGENOM" id="CLU_148710_2_3_6"/>
<dbReference type="Proteomes" id="UP000001006">
    <property type="component" value="Chromosome"/>
</dbReference>
<dbReference type="Proteomes" id="UP000002673">
    <property type="component" value="Chromosome"/>
</dbReference>
<dbReference type="GO" id="GO:0022627">
    <property type="term" value="C:cytosolic small ribosomal subunit"/>
    <property type="evidence" value="ECO:0007669"/>
    <property type="project" value="TreeGrafter"/>
</dbReference>
<dbReference type="GO" id="GO:0070181">
    <property type="term" value="F:small ribosomal subunit rRNA binding"/>
    <property type="evidence" value="ECO:0007669"/>
    <property type="project" value="TreeGrafter"/>
</dbReference>
<dbReference type="GO" id="GO:0003735">
    <property type="term" value="F:structural constituent of ribosome"/>
    <property type="evidence" value="ECO:0007669"/>
    <property type="project" value="InterPro"/>
</dbReference>
<dbReference type="GO" id="GO:0006412">
    <property type="term" value="P:translation"/>
    <property type="evidence" value="ECO:0007669"/>
    <property type="project" value="UniProtKB-UniRule"/>
</dbReference>
<dbReference type="FunFam" id="4.10.640.10:FF:000001">
    <property type="entry name" value="30S ribosomal protein S18"/>
    <property type="match status" value="1"/>
</dbReference>
<dbReference type="Gene3D" id="4.10.640.10">
    <property type="entry name" value="Ribosomal protein S18"/>
    <property type="match status" value="1"/>
</dbReference>
<dbReference type="HAMAP" id="MF_00270">
    <property type="entry name" value="Ribosomal_bS18"/>
    <property type="match status" value="1"/>
</dbReference>
<dbReference type="InterPro" id="IPR001648">
    <property type="entry name" value="Ribosomal_bS18"/>
</dbReference>
<dbReference type="InterPro" id="IPR018275">
    <property type="entry name" value="Ribosomal_bS18_CS"/>
</dbReference>
<dbReference type="InterPro" id="IPR036870">
    <property type="entry name" value="Ribosomal_bS18_sf"/>
</dbReference>
<dbReference type="NCBIfam" id="TIGR00165">
    <property type="entry name" value="S18"/>
    <property type="match status" value="1"/>
</dbReference>
<dbReference type="PANTHER" id="PTHR13479">
    <property type="entry name" value="30S RIBOSOMAL PROTEIN S18"/>
    <property type="match status" value="1"/>
</dbReference>
<dbReference type="PANTHER" id="PTHR13479:SF40">
    <property type="entry name" value="SMALL RIBOSOMAL SUBUNIT PROTEIN BS18M"/>
    <property type="match status" value="1"/>
</dbReference>
<dbReference type="Pfam" id="PF01084">
    <property type="entry name" value="Ribosomal_S18"/>
    <property type="match status" value="1"/>
</dbReference>
<dbReference type="PRINTS" id="PR00974">
    <property type="entry name" value="RIBOSOMALS18"/>
</dbReference>
<dbReference type="SUPFAM" id="SSF46911">
    <property type="entry name" value="Ribosomal protein S18"/>
    <property type="match status" value="1"/>
</dbReference>
<dbReference type="PROSITE" id="PS00057">
    <property type="entry name" value="RIBOSOMAL_S18"/>
    <property type="match status" value="1"/>
</dbReference>
<organism>
    <name type="scientific">Shigella flexneri</name>
    <dbReference type="NCBI Taxonomy" id="623"/>
    <lineage>
        <taxon>Bacteria</taxon>
        <taxon>Pseudomonadati</taxon>
        <taxon>Pseudomonadota</taxon>
        <taxon>Gammaproteobacteria</taxon>
        <taxon>Enterobacterales</taxon>
        <taxon>Enterobacteriaceae</taxon>
        <taxon>Shigella</taxon>
    </lineage>
</organism>
<feature type="initiator methionine" description="Removed" evidence="1">
    <location>
        <position position="1"/>
    </location>
</feature>
<feature type="chain" id="PRO_0000111223" description="Small ribosomal subunit protein bS18">
    <location>
        <begin position="2"/>
        <end position="75"/>
    </location>
</feature>
<feature type="modified residue" description="N-acetylalanine" evidence="1">
    <location>
        <position position="2"/>
    </location>
</feature>
<evidence type="ECO:0000250" key="1"/>
<evidence type="ECO:0000255" key="2">
    <source>
        <dbReference type="HAMAP-Rule" id="MF_00270"/>
    </source>
</evidence>
<evidence type="ECO:0000305" key="3"/>
<protein>
    <recommendedName>
        <fullName evidence="3">Small ribosomal subunit protein bS18</fullName>
    </recommendedName>
    <alternativeName>
        <fullName>30S ribosomal protein S18</fullName>
    </alternativeName>
</protein>
<sequence length="75" mass="8986">MARYFRRRKFCRFTAEGVQEIDYKDIATLKNYITESGKIVPSRITGTRAKYQRQLARAIKRARYLSLLPYTDRHQ</sequence>
<proteinExistence type="inferred from homology"/>
<accession>P0A7U2</accession>
<accession>P02374</accession>